<dbReference type="EC" id="6.1.1.14" evidence="1"/>
<dbReference type="EMBL" id="CP000753">
    <property type="protein sequence ID" value="ABS06181.1"/>
    <property type="molecule type" value="Genomic_DNA"/>
</dbReference>
<dbReference type="RefSeq" id="WP_011981989.1">
    <property type="nucleotide sequence ID" value="NC_009665.1"/>
</dbReference>
<dbReference type="SMR" id="A6WH92"/>
<dbReference type="KEGG" id="sbm:Shew185_0008"/>
<dbReference type="HOGENOM" id="CLU_007220_2_2_6"/>
<dbReference type="GO" id="GO:0005829">
    <property type="term" value="C:cytosol"/>
    <property type="evidence" value="ECO:0007669"/>
    <property type="project" value="TreeGrafter"/>
</dbReference>
<dbReference type="GO" id="GO:0004814">
    <property type="term" value="F:arginine-tRNA ligase activity"/>
    <property type="evidence" value="ECO:0007669"/>
    <property type="project" value="InterPro"/>
</dbReference>
<dbReference type="GO" id="GO:0005524">
    <property type="term" value="F:ATP binding"/>
    <property type="evidence" value="ECO:0007669"/>
    <property type="project" value="UniProtKB-UniRule"/>
</dbReference>
<dbReference type="GO" id="GO:0004820">
    <property type="term" value="F:glycine-tRNA ligase activity"/>
    <property type="evidence" value="ECO:0007669"/>
    <property type="project" value="UniProtKB-UniRule"/>
</dbReference>
<dbReference type="GO" id="GO:0006420">
    <property type="term" value="P:arginyl-tRNA aminoacylation"/>
    <property type="evidence" value="ECO:0007669"/>
    <property type="project" value="InterPro"/>
</dbReference>
<dbReference type="GO" id="GO:0006426">
    <property type="term" value="P:glycyl-tRNA aminoacylation"/>
    <property type="evidence" value="ECO:0007669"/>
    <property type="project" value="UniProtKB-UniRule"/>
</dbReference>
<dbReference type="Gene3D" id="1.10.730.10">
    <property type="entry name" value="Isoleucyl-tRNA Synthetase, Domain 1"/>
    <property type="match status" value="1"/>
</dbReference>
<dbReference type="HAMAP" id="MF_00255">
    <property type="entry name" value="Gly_tRNA_synth_beta"/>
    <property type="match status" value="1"/>
</dbReference>
<dbReference type="InterPro" id="IPR008909">
    <property type="entry name" value="DALR_anticod-bd"/>
</dbReference>
<dbReference type="InterPro" id="IPR015944">
    <property type="entry name" value="Gly-tRNA-synth_bsu"/>
</dbReference>
<dbReference type="InterPro" id="IPR006194">
    <property type="entry name" value="Gly-tRNA-synth_heterodimer"/>
</dbReference>
<dbReference type="NCBIfam" id="TIGR00211">
    <property type="entry name" value="glyS"/>
    <property type="match status" value="1"/>
</dbReference>
<dbReference type="PANTHER" id="PTHR30075:SF2">
    <property type="entry name" value="GLYCINE--TRNA LIGASE, CHLOROPLASTIC_MITOCHONDRIAL 2"/>
    <property type="match status" value="1"/>
</dbReference>
<dbReference type="PANTHER" id="PTHR30075">
    <property type="entry name" value="GLYCYL-TRNA SYNTHETASE"/>
    <property type="match status" value="1"/>
</dbReference>
<dbReference type="Pfam" id="PF05746">
    <property type="entry name" value="DALR_1"/>
    <property type="match status" value="1"/>
</dbReference>
<dbReference type="Pfam" id="PF02092">
    <property type="entry name" value="tRNA_synt_2f"/>
    <property type="match status" value="1"/>
</dbReference>
<dbReference type="PRINTS" id="PR01045">
    <property type="entry name" value="TRNASYNTHGB"/>
</dbReference>
<dbReference type="SMART" id="SM00836">
    <property type="entry name" value="DALR_1"/>
    <property type="match status" value="1"/>
</dbReference>
<dbReference type="SUPFAM" id="SSF109604">
    <property type="entry name" value="HD-domain/PDEase-like"/>
    <property type="match status" value="1"/>
</dbReference>
<dbReference type="PROSITE" id="PS50861">
    <property type="entry name" value="AA_TRNA_LIGASE_II_GLYAB"/>
    <property type="match status" value="1"/>
</dbReference>
<comment type="catalytic activity">
    <reaction evidence="1">
        <text>tRNA(Gly) + glycine + ATP = glycyl-tRNA(Gly) + AMP + diphosphate</text>
        <dbReference type="Rhea" id="RHEA:16013"/>
        <dbReference type="Rhea" id="RHEA-COMP:9664"/>
        <dbReference type="Rhea" id="RHEA-COMP:9683"/>
        <dbReference type="ChEBI" id="CHEBI:30616"/>
        <dbReference type="ChEBI" id="CHEBI:33019"/>
        <dbReference type="ChEBI" id="CHEBI:57305"/>
        <dbReference type="ChEBI" id="CHEBI:78442"/>
        <dbReference type="ChEBI" id="CHEBI:78522"/>
        <dbReference type="ChEBI" id="CHEBI:456215"/>
        <dbReference type="EC" id="6.1.1.14"/>
    </reaction>
</comment>
<comment type="subunit">
    <text evidence="1">Tetramer of two alpha and two beta subunits.</text>
</comment>
<comment type="subcellular location">
    <subcellularLocation>
        <location evidence="1">Cytoplasm</location>
    </subcellularLocation>
</comment>
<comment type="similarity">
    <text evidence="1">Belongs to the class-II aminoacyl-tRNA synthetase family.</text>
</comment>
<feature type="chain" id="PRO_1000006401" description="Glycine--tRNA ligase beta subunit">
    <location>
        <begin position="1"/>
        <end position="689"/>
    </location>
</feature>
<organism>
    <name type="scientific">Shewanella baltica (strain OS185)</name>
    <dbReference type="NCBI Taxonomy" id="402882"/>
    <lineage>
        <taxon>Bacteria</taxon>
        <taxon>Pseudomonadati</taxon>
        <taxon>Pseudomonadota</taxon>
        <taxon>Gammaproteobacteria</taxon>
        <taxon>Alteromonadales</taxon>
        <taxon>Shewanellaceae</taxon>
        <taxon>Shewanella</taxon>
    </lineage>
</organism>
<reference key="1">
    <citation type="submission" date="2007-07" db="EMBL/GenBank/DDBJ databases">
        <title>Complete sequence of chromosome of Shewanella baltica OS185.</title>
        <authorList>
            <consortium name="US DOE Joint Genome Institute"/>
            <person name="Copeland A."/>
            <person name="Lucas S."/>
            <person name="Lapidus A."/>
            <person name="Barry K."/>
            <person name="Glavina del Rio T."/>
            <person name="Dalin E."/>
            <person name="Tice H."/>
            <person name="Pitluck S."/>
            <person name="Sims D."/>
            <person name="Brettin T."/>
            <person name="Bruce D."/>
            <person name="Detter J.C."/>
            <person name="Han C."/>
            <person name="Schmutz J."/>
            <person name="Larimer F."/>
            <person name="Land M."/>
            <person name="Hauser L."/>
            <person name="Kyrpides N."/>
            <person name="Mikhailova N."/>
            <person name="Brettar I."/>
            <person name="Rodrigues J."/>
            <person name="Konstantinidis K."/>
            <person name="Tiedje J."/>
            <person name="Richardson P."/>
        </authorList>
    </citation>
    <scope>NUCLEOTIDE SEQUENCE [LARGE SCALE GENOMIC DNA]</scope>
    <source>
        <strain>OS185</strain>
    </source>
</reference>
<accession>A6WH92</accession>
<keyword id="KW-0030">Aminoacyl-tRNA synthetase</keyword>
<keyword id="KW-0067">ATP-binding</keyword>
<keyword id="KW-0963">Cytoplasm</keyword>
<keyword id="KW-0436">Ligase</keyword>
<keyword id="KW-0547">Nucleotide-binding</keyword>
<keyword id="KW-0648">Protein biosynthesis</keyword>
<name>SYGB_SHEB8</name>
<sequence>MNFENLLIELGTEELPPKSLRKLAESFLANFTEELTKADLAFSSAVWYAAPRRLAINVTELALAQADKVVEKRGPAVSSAFDAEGKPTKAAEGWARGNGITVEQAERLVTDKGEWLVHNAKVEGVETKSLIAAMAQRALDKLPIPKPMRWGNNKTQFIRPVHTATMLLGSELIEGELLGIKSARTVRGHRFMGQASFELAHADHYLADLKEKGKVIADYEVRKTLIKADAEKAAAKIGGKADIEDSLLEEVASLVEWPVVLTASFEEKFLNVPSEALVYTMKGDQKYFPVFDEAGKLLPNFIFVTNIESKDPAQIISGNEKVVRPRLADAEFFFNTDKKHTLESRLPSLETVLFQQQLGTLKDKVNRISALAAFIAEQTGANAVDAARAGLLSKTDLMTNMVMEFTDTQGTMGMHYARLDGETEAVAVAMEEQYKPKFSGDTVPSAGVSCAVALADKLDTLVGIFGIGQAPKGAADPFALRRAAIGVLRIIVENKLPLDLVDLIAKAQALHGTNLSNANASDEVLEFLMARFRAWYQDKGIGVDVILAVLARRPTRPADFDSRINAVSHFRSLEASSALAAANKRVSNILAKVEGALPTTINANLLTEAAEQALAAKLNELQPLLAPLFANADYQQALTLLAGLRESVDQFFEDVMVMADDEALKNNRLALLNNLREQFLHVADISLLQ</sequence>
<protein>
    <recommendedName>
        <fullName evidence="1">Glycine--tRNA ligase beta subunit</fullName>
        <ecNumber evidence="1">6.1.1.14</ecNumber>
    </recommendedName>
    <alternativeName>
        <fullName evidence="1">Glycyl-tRNA synthetase beta subunit</fullName>
        <shortName evidence="1">GlyRS</shortName>
    </alternativeName>
</protein>
<evidence type="ECO:0000255" key="1">
    <source>
        <dbReference type="HAMAP-Rule" id="MF_00255"/>
    </source>
</evidence>
<proteinExistence type="inferred from homology"/>
<gene>
    <name evidence="1" type="primary">glyS</name>
    <name type="ordered locus">Shew185_0008</name>
</gene>